<evidence type="ECO:0000250" key="1">
    <source>
        <dbReference type="UniProtKB" id="P45541"/>
    </source>
</evidence>
<evidence type="ECO:0000250" key="2">
    <source>
        <dbReference type="UniProtKB" id="Q9WYP7"/>
    </source>
</evidence>
<evidence type="ECO:0000305" key="3"/>
<sequence length="276" mass="31121">MKTGMFTCGHQRLPIEHAFRDASELGYDGIEIWGGRPHAFAPDLKAGGIKQIKALAQTYQMPIIGYTPETNGYPYNMMLGDEHMRRESLDMIKLAIDMAKEMNAGYTLISAAHAGYLTPPNVIWGRLAENLSELCEYAENIGMDLILEPLTPYESNVVCNANDVLHALALVPSPRLFSMVDICAPYVQAEPVMSYFDKLGDKLRHLHIVDSDGASDTHYIPGEGKMPLRELMRDIIDRGYEGYSTVELVTMYMNEPRLYARQALERFRALLPEDER</sequence>
<proteinExistence type="inferred from homology"/>
<dbReference type="EC" id="5.1.3.41" evidence="1"/>
<dbReference type="EMBL" id="AE005674">
    <property type="protein sequence ID" value="AAN44853.2"/>
    <property type="molecule type" value="Genomic_DNA"/>
</dbReference>
<dbReference type="EMBL" id="AE014073">
    <property type="protein sequence ID" value="AAP19325.1"/>
    <property type="molecule type" value="Genomic_DNA"/>
</dbReference>
<dbReference type="RefSeq" id="WP_000847821.1">
    <property type="nucleotide sequence ID" value="NZ_WPGW01000003.1"/>
</dbReference>
<dbReference type="SMR" id="Q83JB2"/>
<dbReference type="STRING" id="198214.SF3391"/>
<dbReference type="PaxDb" id="198214-SF3391"/>
<dbReference type="KEGG" id="sfl:SF3391"/>
<dbReference type="KEGG" id="sfx:S4371"/>
<dbReference type="PATRIC" id="fig|198214.7.peg.4004"/>
<dbReference type="HOGENOM" id="CLU_050006_5_1_6"/>
<dbReference type="Proteomes" id="UP000001006">
    <property type="component" value="Chromosome"/>
</dbReference>
<dbReference type="Proteomes" id="UP000002673">
    <property type="component" value="Chromosome"/>
</dbReference>
<dbReference type="GO" id="GO:0016853">
    <property type="term" value="F:isomerase activity"/>
    <property type="evidence" value="ECO:0007669"/>
    <property type="project" value="UniProtKB-KW"/>
</dbReference>
<dbReference type="GO" id="GO:0046872">
    <property type="term" value="F:metal ion binding"/>
    <property type="evidence" value="ECO:0007669"/>
    <property type="project" value="UniProtKB-KW"/>
</dbReference>
<dbReference type="Gene3D" id="3.20.20.150">
    <property type="entry name" value="Divalent-metal-dependent TIM barrel enzymes"/>
    <property type="match status" value="1"/>
</dbReference>
<dbReference type="InterPro" id="IPR050312">
    <property type="entry name" value="IolE/XylAMocC-like"/>
</dbReference>
<dbReference type="InterPro" id="IPR036237">
    <property type="entry name" value="Xyl_isomerase-like_sf"/>
</dbReference>
<dbReference type="InterPro" id="IPR013022">
    <property type="entry name" value="Xyl_isomerase-like_TIM-brl"/>
</dbReference>
<dbReference type="NCBIfam" id="NF007360">
    <property type="entry name" value="PRK09856.1"/>
    <property type="match status" value="1"/>
</dbReference>
<dbReference type="PANTHER" id="PTHR12110">
    <property type="entry name" value="HYDROXYPYRUVATE ISOMERASE"/>
    <property type="match status" value="1"/>
</dbReference>
<dbReference type="PANTHER" id="PTHR12110:SF21">
    <property type="entry name" value="XYLOSE ISOMERASE-LIKE TIM BARREL DOMAIN-CONTAINING PROTEIN"/>
    <property type="match status" value="1"/>
</dbReference>
<dbReference type="Pfam" id="PF01261">
    <property type="entry name" value="AP_endonuc_2"/>
    <property type="match status" value="1"/>
</dbReference>
<dbReference type="SUPFAM" id="SSF51658">
    <property type="entry name" value="Xylose isomerase-like"/>
    <property type="match status" value="1"/>
</dbReference>
<feature type="chain" id="PRO_0000087339" description="Fructoselysine 3-epimerase">
    <location>
        <begin position="1"/>
        <end position="276"/>
    </location>
</feature>
<feature type="active site" description="Proton donor/acceptor" evidence="2">
    <location>
        <position position="148"/>
    </location>
</feature>
<feature type="active site" description="Proton donor/acceptor" evidence="2">
    <location>
        <position position="247"/>
    </location>
</feature>
<feature type="binding site" evidence="2">
    <location>
        <position position="148"/>
    </location>
    <ligand>
        <name>a divalent metal cation</name>
        <dbReference type="ChEBI" id="CHEBI:60240"/>
    </ligand>
</feature>
<feature type="binding site" evidence="2">
    <location>
        <position position="181"/>
    </location>
    <ligand>
        <name>a divalent metal cation</name>
        <dbReference type="ChEBI" id="CHEBI:60240"/>
    </ligand>
</feature>
<feature type="binding site" evidence="2">
    <location>
        <position position="207"/>
    </location>
    <ligand>
        <name>a divalent metal cation</name>
        <dbReference type="ChEBI" id="CHEBI:60240"/>
    </ligand>
</feature>
<feature type="binding site" evidence="2">
    <location>
        <position position="247"/>
    </location>
    <ligand>
        <name>a divalent metal cation</name>
        <dbReference type="ChEBI" id="CHEBI:60240"/>
    </ligand>
</feature>
<protein>
    <recommendedName>
        <fullName evidence="1">Fructoselysine 3-epimerase</fullName>
        <ecNumber evidence="1">5.1.3.41</ecNumber>
    </recommendedName>
</protein>
<keyword id="KW-0413">Isomerase</keyword>
<keyword id="KW-0479">Metal-binding</keyword>
<keyword id="KW-1185">Reference proteome</keyword>
<name>FRLC_SHIFL</name>
<organism>
    <name type="scientific">Shigella flexneri</name>
    <dbReference type="NCBI Taxonomy" id="623"/>
    <lineage>
        <taxon>Bacteria</taxon>
        <taxon>Pseudomonadati</taxon>
        <taxon>Pseudomonadota</taxon>
        <taxon>Gammaproteobacteria</taxon>
        <taxon>Enterobacterales</taxon>
        <taxon>Enterobacteriaceae</taxon>
        <taxon>Shigella</taxon>
    </lineage>
</organism>
<comment type="function">
    <text evidence="1">Catalyzes the reversible interconversion of fructoselysine with its C-3 epimer, psicoselysine. May allow S.flexneri to utilize psicoselysine for growth.</text>
</comment>
<comment type="catalytic activity">
    <reaction evidence="1">
        <text>N(6)-(D-psicosyl)-L-lysine = N(6)-(D-fructosyl)-L-lysine</text>
        <dbReference type="Rhea" id="RHEA:28390"/>
        <dbReference type="ChEBI" id="CHEBI:61393"/>
        <dbReference type="ChEBI" id="CHEBI:61403"/>
        <dbReference type="EC" id="5.1.3.41"/>
    </reaction>
</comment>
<comment type="cofactor">
    <cofactor evidence="1">
        <name>a divalent metal cation</name>
        <dbReference type="ChEBI" id="CHEBI:60240"/>
    </cofactor>
</comment>
<comment type="subunit">
    <text evidence="1">Homooctamer.</text>
</comment>
<comment type="similarity">
    <text evidence="3">Belongs to the FrlC family.</text>
</comment>
<reference key="1">
    <citation type="journal article" date="2002" name="Nucleic Acids Res.">
        <title>Genome sequence of Shigella flexneri 2a: insights into pathogenicity through comparison with genomes of Escherichia coli K12 and O157.</title>
        <authorList>
            <person name="Jin Q."/>
            <person name="Yuan Z."/>
            <person name="Xu J."/>
            <person name="Wang Y."/>
            <person name="Shen Y."/>
            <person name="Lu W."/>
            <person name="Wang J."/>
            <person name="Liu H."/>
            <person name="Yang J."/>
            <person name="Yang F."/>
            <person name="Zhang X."/>
            <person name="Zhang J."/>
            <person name="Yang G."/>
            <person name="Wu H."/>
            <person name="Qu D."/>
            <person name="Dong J."/>
            <person name="Sun L."/>
            <person name="Xue Y."/>
            <person name="Zhao A."/>
            <person name="Gao Y."/>
            <person name="Zhu J."/>
            <person name="Kan B."/>
            <person name="Ding K."/>
            <person name="Chen S."/>
            <person name="Cheng H."/>
            <person name="Yao Z."/>
            <person name="He B."/>
            <person name="Chen R."/>
            <person name="Ma D."/>
            <person name="Qiang B."/>
            <person name="Wen Y."/>
            <person name="Hou Y."/>
            <person name="Yu J."/>
        </authorList>
    </citation>
    <scope>NUCLEOTIDE SEQUENCE [LARGE SCALE GENOMIC DNA]</scope>
    <source>
        <strain>301 / Serotype 2a</strain>
    </source>
</reference>
<reference key="2">
    <citation type="journal article" date="2003" name="Infect. Immun.">
        <title>Complete genome sequence and comparative genomics of Shigella flexneri serotype 2a strain 2457T.</title>
        <authorList>
            <person name="Wei J."/>
            <person name="Goldberg M.B."/>
            <person name="Burland V."/>
            <person name="Venkatesan M.M."/>
            <person name="Deng W."/>
            <person name="Fournier G."/>
            <person name="Mayhew G.F."/>
            <person name="Plunkett G. III"/>
            <person name="Rose D.J."/>
            <person name="Darling A."/>
            <person name="Mau B."/>
            <person name="Perna N.T."/>
            <person name="Payne S.M."/>
            <person name="Runyen-Janecky L.J."/>
            <person name="Zhou S."/>
            <person name="Schwartz D.C."/>
            <person name="Blattner F.R."/>
        </authorList>
    </citation>
    <scope>NUCLEOTIDE SEQUENCE [LARGE SCALE GENOMIC DNA]</scope>
    <source>
        <strain>ATCC 700930 / 2457T / Serotype 2a</strain>
    </source>
</reference>
<accession>Q83JB2</accession>
<accession>Q7UAR9</accession>
<gene>
    <name type="primary">frlC</name>
    <name type="ordered locus">SF3391</name>
    <name type="ordered locus">S4371</name>
</gene>